<feature type="chain" id="PRO_0000165500" description="Holliday junction branch migration complex subunit RuvB">
    <location>
        <begin position="1"/>
        <end position="347"/>
    </location>
</feature>
<feature type="region of interest" description="Large ATPase domain (RuvB-L)" evidence="1">
    <location>
        <begin position="1"/>
        <end position="186"/>
    </location>
</feature>
<feature type="region of interest" description="Small ATPAse domain (RuvB-S)" evidence="1">
    <location>
        <begin position="187"/>
        <end position="257"/>
    </location>
</feature>
<feature type="region of interest" description="Head domain (RuvB-H)" evidence="1">
    <location>
        <begin position="260"/>
        <end position="347"/>
    </location>
</feature>
<feature type="binding site" evidence="1">
    <location>
        <position position="25"/>
    </location>
    <ligand>
        <name>ATP</name>
        <dbReference type="ChEBI" id="CHEBI:30616"/>
    </ligand>
</feature>
<feature type="binding site" evidence="1">
    <location>
        <position position="26"/>
    </location>
    <ligand>
        <name>ATP</name>
        <dbReference type="ChEBI" id="CHEBI:30616"/>
    </ligand>
</feature>
<feature type="binding site" evidence="1">
    <location>
        <position position="67"/>
    </location>
    <ligand>
        <name>ATP</name>
        <dbReference type="ChEBI" id="CHEBI:30616"/>
    </ligand>
</feature>
<feature type="binding site" evidence="1">
    <location>
        <position position="70"/>
    </location>
    <ligand>
        <name>ATP</name>
        <dbReference type="ChEBI" id="CHEBI:30616"/>
    </ligand>
</feature>
<feature type="binding site" evidence="1">
    <location>
        <position position="71"/>
    </location>
    <ligand>
        <name>ATP</name>
        <dbReference type="ChEBI" id="CHEBI:30616"/>
    </ligand>
</feature>
<feature type="binding site" evidence="1">
    <location>
        <position position="71"/>
    </location>
    <ligand>
        <name>Mg(2+)</name>
        <dbReference type="ChEBI" id="CHEBI:18420"/>
    </ligand>
</feature>
<feature type="binding site" evidence="1">
    <location>
        <position position="72"/>
    </location>
    <ligand>
        <name>ATP</name>
        <dbReference type="ChEBI" id="CHEBI:30616"/>
    </ligand>
</feature>
<feature type="binding site" evidence="1">
    <location>
        <begin position="133"/>
        <end position="135"/>
    </location>
    <ligand>
        <name>ATP</name>
        <dbReference type="ChEBI" id="CHEBI:30616"/>
    </ligand>
</feature>
<feature type="binding site" evidence="1">
    <location>
        <position position="176"/>
    </location>
    <ligand>
        <name>ATP</name>
        <dbReference type="ChEBI" id="CHEBI:30616"/>
    </ligand>
</feature>
<feature type="binding site" evidence="1">
    <location>
        <position position="186"/>
    </location>
    <ligand>
        <name>ATP</name>
        <dbReference type="ChEBI" id="CHEBI:30616"/>
    </ligand>
</feature>
<feature type="binding site" evidence="1">
    <location>
        <position position="223"/>
    </location>
    <ligand>
        <name>ATP</name>
        <dbReference type="ChEBI" id="CHEBI:30616"/>
    </ligand>
</feature>
<feature type="binding site" evidence="1">
    <location>
        <position position="315"/>
    </location>
    <ligand>
        <name>DNA</name>
        <dbReference type="ChEBI" id="CHEBI:16991"/>
    </ligand>
</feature>
<feature type="binding site" evidence="1">
    <location>
        <position position="320"/>
    </location>
    <ligand>
        <name>DNA</name>
        <dbReference type="ChEBI" id="CHEBI:16991"/>
    </ligand>
</feature>
<dbReference type="EC" id="3.6.4.-" evidence="1"/>
<dbReference type="EMBL" id="Y08885">
    <property type="protein sequence ID" value="CAA70097.1"/>
    <property type="molecule type" value="Genomic_DNA"/>
</dbReference>
<dbReference type="EMBL" id="AE000783">
    <property type="protein sequence ID" value="AAC66410.1"/>
    <property type="molecule type" value="Genomic_DNA"/>
</dbReference>
<dbReference type="PIR" id="F70102">
    <property type="entry name" value="F70102"/>
</dbReference>
<dbReference type="RefSeq" id="NP_212156.1">
    <property type="nucleotide sequence ID" value="NC_001318.1"/>
</dbReference>
<dbReference type="RefSeq" id="WP_002556628.1">
    <property type="nucleotide sequence ID" value="NC_001318.1"/>
</dbReference>
<dbReference type="SMR" id="P70828"/>
<dbReference type="STRING" id="224326.BB_0022"/>
<dbReference type="PaxDb" id="224326-BB_0022"/>
<dbReference type="EnsemblBacteria" id="AAC66410">
    <property type="protein sequence ID" value="AAC66410"/>
    <property type="gene ID" value="BB_0022"/>
</dbReference>
<dbReference type="GeneID" id="56568193"/>
<dbReference type="KEGG" id="bbu:BB_0022"/>
<dbReference type="PATRIC" id="fig|224326.49.peg.421"/>
<dbReference type="HOGENOM" id="CLU_055599_1_0_12"/>
<dbReference type="OrthoDB" id="9804478at2"/>
<dbReference type="Proteomes" id="UP000001807">
    <property type="component" value="Chromosome"/>
</dbReference>
<dbReference type="GO" id="GO:0005737">
    <property type="term" value="C:cytoplasm"/>
    <property type="evidence" value="ECO:0007669"/>
    <property type="project" value="UniProtKB-SubCell"/>
</dbReference>
<dbReference type="GO" id="GO:0048476">
    <property type="term" value="C:Holliday junction resolvase complex"/>
    <property type="evidence" value="ECO:0007669"/>
    <property type="project" value="UniProtKB-UniRule"/>
</dbReference>
<dbReference type="GO" id="GO:0005524">
    <property type="term" value="F:ATP binding"/>
    <property type="evidence" value="ECO:0007669"/>
    <property type="project" value="UniProtKB-UniRule"/>
</dbReference>
<dbReference type="GO" id="GO:0016887">
    <property type="term" value="F:ATP hydrolysis activity"/>
    <property type="evidence" value="ECO:0007669"/>
    <property type="project" value="InterPro"/>
</dbReference>
<dbReference type="GO" id="GO:0000400">
    <property type="term" value="F:four-way junction DNA binding"/>
    <property type="evidence" value="ECO:0007669"/>
    <property type="project" value="UniProtKB-UniRule"/>
</dbReference>
<dbReference type="GO" id="GO:0009378">
    <property type="term" value="F:four-way junction helicase activity"/>
    <property type="evidence" value="ECO:0007669"/>
    <property type="project" value="InterPro"/>
</dbReference>
<dbReference type="GO" id="GO:0006310">
    <property type="term" value="P:DNA recombination"/>
    <property type="evidence" value="ECO:0007669"/>
    <property type="project" value="UniProtKB-UniRule"/>
</dbReference>
<dbReference type="GO" id="GO:0006281">
    <property type="term" value="P:DNA repair"/>
    <property type="evidence" value="ECO:0007669"/>
    <property type="project" value="UniProtKB-UniRule"/>
</dbReference>
<dbReference type="CDD" id="cd00009">
    <property type="entry name" value="AAA"/>
    <property type="match status" value="1"/>
</dbReference>
<dbReference type="Gene3D" id="1.10.8.60">
    <property type="match status" value="1"/>
</dbReference>
<dbReference type="Gene3D" id="3.40.50.300">
    <property type="entry name" value="P-loop containing nucleotide triphosphate hydrolases"/>
    <property type="match status" value="1"/>
</dbReference>
<dbReference type="Gene3D" id="1.10.10.10">
    <property type="entry name" value="Winged helix-like DNA-binding domain superfamily/Winged helix DNA-binding domain"/>
    <property type="match status" value="1"/>
</dbReference>
<dbReference type="HAMAP" id="MF_00016">
    <property type="entry name" value="DNA_HJ_migration_RuvB"/>
    <property type="match status" value="1"/>
</dbReference>
<dbReference type="InterPro" id="IPR003593">
    <property type="entry name" value="AAA+_ATPase"/>
</dbReference>
<dbReference type="InterPro" id="IPR041445">
    <property type="entry name" value="AAA_lid_4"/>
</dbReference>
<dbReference type="InterPro" id="IPR004605">
    <property type="entry name" value="DNA_helicase_Holl-junc_RuvB"/>
</dbReference>
<dbReference type="InterPro" id="IPR027417">
    <property type="entry name" value="P-loop_NTPase"/>
</dbReference>
<dbReference type="InterPro" id="IPR008824">
    <property type="entry name" value="RuvB-like_N"/>
</dbReference>
<dbReference type="InterPro" id="IPR008823">
    <property type="entry name" value="RuvB_C"/>
</dbReference>
<dbReference type="InterPro" id="IPR036388">
    <property type="entry name" value="WH-like_DNA-bd_sf"/>
</dbReference>
<dbReference type="InterPro" id="IPR036390">
    <property type="entry name" value="WH_DNA-bd_sf"/>
</dbReference>
<dbReference type="NCBIfam" id="NF000868">
    <property type="entry name" value="PRK00080.1"/>
    <property type="match status" value="1"/>
</dbReference>
<dbReference type="NCBIfam" id="TIGR00635">
    <property type="entry name" value="ruvB"/>
    <property type="match status" value="1"/>
</dbReference>
<dbReference type="PANTHER" id="PTHR42848">
    <property type="match status" value="1"/>
</dbReference>
<dbReference type="PANTHER" id="PTHR42848:SF1">
    <property type="entry name" value="HOLLIDAY JUNCTION BRANCH MIGRATION COMPLEX SUBUNIT RUVB"/>
    <property type="match status" value="1"/>
</dbReference>
<dbReference type="Pfam" id="PF17864">
    <property type="entry name" value="AAA_lid_4"/>
    <property type="match status" value="1"/>
</dbReference>
<dbReference type="Pfam" id="PF05491">
    <property type="entry name" value="RuvB_C"/>
    <property type="match status" value="1"/>
</dbReference>
<dbReference type="Pfam" id="PF05496">
    <property type="entry name" value="RuvB_N"/>
    <property type="match status" value="1"/>
</dbReference>
<dbReference type="SMART" id="SM00382">
    <property type="entry name" value="AAA"/>
    <property type="match status" value="1"/>
</dbReference>
<dbReference type="SUPFAM" id="SSF52540">
    <property type="entry name" value="P-loop containing nucleoside triphosphate hydrolases"/>
    <property type="match status" value="1"/>
</dbReference>
<dbReference type="SUPFAM" id="SSF46785">
    <property type="entry name" value="Winged helix' DNA-binding domain"/>
    <property type="match status" value="1"/>
</dbReference>
<name>RUVB_BORBU</name>
<reference key="1">
    <citation type="journal article" date="1998" name="Res. Microbiol.">
        <title>Homologues of helicase genes priA and ruvAB of Borrelia burgdorferi, the Lyme borreliosis agent.</title>
        <authorList>
            <person name="Boursaux-Eude C."/>
            <person name="Margarita D."/>
            <person name="Belfaiza J."/>
            <person name="Old I.G."/>
            <person name="Saint-Girons I."/>
        </authorList>
    </citation>
    <scope>NUCLEOTIDE SEQUENCE [GENOMIC DNA]</scope>
    <source>
        <strain>HB19</strain>
    </source>
</reference>
<reference key="2">
    <citation type="journal article" date="1997" name="Nature">
        <title>Genomic sequence of a Lyme disease spirochaete, Borrelia burgdorferi.</title>
        <authorList>
            <person name="Fraser C.M."/>
            <person name="Casjens S."/>
            <person name="Huang W.M."/>
            <person name="Sutton G.G."/>
            <person name="Clayton R.A."/>
            <person name="Lathigra R."/>
            <person name="White O."/>
            <person name="Ketchum K.A."/>
            <person name="Dodson R.J."/>
            <person name="Hickey E.K."/>
            <person name="Gwinn M.L."/>
            <person name="Dougherty B.A."/>
            <person name="Tomb J.-F."/>
            <person name="Fleischmann R.D."/>
            <person name="Richardson D.L."/>
            <person name="Peterson J.D."/>
            <person name="Kerlavage A.R."/>
            <person name="Quackenbush J."/>
            <person name="Salzberg S.L."/>
            <person name="Hanson M."/>
            <person name="van Vugt R."/>
            <person name="Palmer N."/>
            <person name="Adams M.D."/>
            <person name="Gocayne J.D."/>
            <person name="Weidman J.F."/>
            <person name="Utterback T.R."/>
            <person name="Watthey L."/>
            <person name="McDonald L.A."/>
            <person name="Artiach P."/>
            <person name="Bowman C."/>
            <person name="Garland S.A."/>
            <person name="Fujii C."/>
            <person name="Cotton M.D."/>
            <person name="Horst K."/>
            <person name="Roberts K.M."/>
            <person name="Hatch B."/>
            <person name="Smith H.O."/>
            <person name="Venter J.C."/>
        </authorList>
    </citation>
    <scope>NUCLEOTIDE SEQUENCE [LARGE SCALE GENOMIC DNA]</scope>
    <source>
        <strain>ATCC 35210 / DSM 4680 / CIP 102532 / B31</strain>
    </source>
</reference>
<proteinExistence type="inferred from homology"/>
<comment type="function">
    <text evidence="1">The RuvA-RuvB-RuvC complex processes Holliday junction (HJ) DNA during genetic recombination and DNA repair, while the RuvA-RuvB complex plays an important role in the rescue of blocked DNA replication forks via replication fork reversal (RFR). RuvA specifically binds to HJ cruciform DNA, conferring on it an open structure. The RuvB hexamer acts as an ATP-dependent pump, pulling dsDNA into and through the RuvAB complex. RuvB forms 2 homohexamers on either side of HJ DNA bound by 1 or 2 RuvA tetramers; 4 subunits per hexamer contact DNA at a time. Coordinated motions by a converter formed by DNA-disengaged RuvB subunits stimulates ATP hydrolysis and nucleotide exchange. Immobilization of the converter enables RuvB to convert the ATP-contained energy into a lever motion, pulling 2 nucleotides of DNA out of the RuvA tetramer per ATP hydrolyzed, thus driving DNA branch migration. The RuvB motors rotate together with the DNA substrate, which together with the progressing nucleotide cycle form the mechanistic basis for DNA recombination by continuous HJ branch migration. Branch migration allows RuvC to scan DNA until it finds its consensus sequence, where it cleaves and resolves cruciform DNA.</text>
</comment>
<comment type="catalytic activity">
    <reaction evidence="1">
        <text>ATP + H2O = ADP + phosphate + H(+)</text>
        <dbReference type="Rhea" id="RHEA:13065"/>
        <dbReference type="ChEBI" id="CHEBI:15377"/>
        <dbReference type="ChEBI" id="CHEBI:15378"/>
        <dbReference type="ChEBI" id="CHEBI:30616"/>
        <dbReference type="ChEBI" id="CHEBI:43474"/>
        <dbReference type="ChEBI" id="CHEBI:456216"/>
    </reaction>
</comment>
<comment type="subunit">
    <text evidence="1">Homohexamer. Forms an RuvA(8)-RuvB(12)-Holliday junction (HJ) complex. HJ DNA is sandwiched between 2 RuvA tetramers; dsDNA enters through RuvA and exits via RuvB. An RuvB hexamer assembles on each DNA strand where it exits the tetramer. Each RuvB hexamer is contacted by two RuvA subunits (via domain III) on 2 adjacent RuvB subunits; this complex drives branch migration. In the full resolvosome a probable DNA-RuvA(4)-RuvB(12)-RuvC(2) complex forms which resolves the HJ.</text>
</comment>
<comment type="subcellular location">
    <subcellularLocation>
        <location evidence="1">Cytoplasm</location>
    </subcellularLocation>
</comment>
<comment type="domain">
    <text evidence="1">Has 3 domains, the large (RuvB-L) and small ATPase (RuvB-S) domains and the C-terminal head (RuvB-H) domain. The head domain binds DNA, while the ATPase domains jointly bind ATP, ADP or are empty depending on the state of the subunit in the translocation cycle. During a single DNA translocation step the structure of each domain remains the same, but their relative positions change.</text>
</comment>
<comment type="similarity">
    <text evidence="1">Belongs to the RuvB family.</text>
</comment>
<protein>
    <recommendedName>
        <fullName evidence="1">Holliday junction branch migration complex subunit RuvB</fullName>
        <ecNumber evidence="1">3.6.4.-</ecNumber>
    </recommendedName>
</protein>
<evidence type="ECO:0000255" key="1">
    <source>
        <dbReference type="HAMAP-Rule" id="MF_00016"/>
    </source>
</evidence>
<sequence length="347" mass="39006">MKDENSISFLSSNENYLYDKSENELRPKVFEDFKGQVNVKETLSIFIRASKERDEALDHVFLSGPPGLGKTTLASIIAFEMNASIKITSAPAFDKPKDIIGILTGLDEKSVLFIDEIHRLRPIIEEMLCIAMEDYELDWVIGQGANARTVRMPLPKFTLIGATTKPGKVTSPLYARFGITARFELYSEIELVEIIKRNSLILNIEIEEDAAFLLARSSRGTPRIANRLLRRIRDIAQVTGSLVITSDIVSIGLEMLRIDGEGLDEQDRNILRSLILKFNGGPVGVDTLAISVGETADSLEDFYEPYLIMKGFISRTHRGRKATEFAYLHLNLEMKEDGLNENQRVSF</sequence>
<accession>P70828</accession>
<organism>
    <name type="scientific">Borreliella burgdorferi (strain ATCC 35210 / DSM 4680 / CIP 102532 / B31)</name>
    <name type="common">Borrelia burgdorferi</name>
    <dbReference type="NCBI Taxonomy" id="224326"/>
    <lineage>
        <taxon>Bacteria</taxon>
        <taxon>Pseudomonadati</taxon>
        <taxon>Spirochaetota</taxon>
        <taxon>Spirochaetia</taxon>
        <taxon>Spirochaetales</taxon>
        <taxon>Borreliaceae</taxon>
        <taxon>Borreliella</taxon>
    </lineage>
</organism>
<gene>
    <name evidence="1" type="primary">ruvB</name>
    <name type="ordered locus">BB_0022</name>
</gene>
<keyword id="KW-0067">ATP-binding</keyword>
<keyword id="KW-0963">Cytoplasm</keyword>
<keyword id="KW-0227">DNA damage</keyword>
<keyword id="KW-0233">DNA recombination</keyword>
<keyword id="KW-0234">DNA repair</keyword>
<keyword id="KW-0238">DNA-binding</keyword>
<keyword id="KW-0378">Hydrolase</keyword>
<keyword id="KW-0547">Nucleotide-binding</keyword>
<keyword id="KW-1185">Reference proteome</keyword>